<proteinExistence type="inferred from homology"/>
<dbReference type="EMBL" id="CP001389">
    <property type="protein sequence ID" value="ACP24987.1"/>
    <property type="molecule type" value="Genomic_DNA"/>
</dbReference>
<dbReference type="RefSeq" id="WP_012707765.1">
    <property type="nucleotide sequence ID" value="NC_012587.1"/>
</dbReference>
<dbReference type="RefSeq" id="YP_002825740.1">
    <property type="nucleotide sequence ID" value="NC_012587.1"/>
</dbReference>
<dbReference type="SMR" id="C3MAZ4"/>
<dbReference type="STRING" id="394.NGR_c12050"/>
<dbReference type="GeneID" id="48972695"/>
<dbReference type="KEGG" id="rhi:NGR_c12050"/>
<dbReference type="PATRIC" id="fig|394.7.peg.4021"/>
<dbReference type="eggNOG" id="COG0096">
    <property type="taxonomic scope" value="Bacteria"/>
</dbReference>
<dbReference type="HOGENOM" id="CLU_098428_0_0_5"/>
<dbReference type="OrthoDB" id="9802617at2"/>
<dbReference type="Proteomes" id="UP000001054">
    <property type="component" value="Chromosome"/>
</dbReference>
<dbReference type="GO" id="GO:1990904">
    <property type="term" value="C:ribonucleoprotein complex"/>
    <property type="evidence" value="ECO:0007669"/>
    <property type="project" value="UniProtKB-KW"/>
</dbReference>
<dbReference type="GO" id="GO:0005840">
    <property type="term" value="C:ribosome"/>
    <property type="evidence" value="ECO:0007669"/>
    <property type="project" value="UniProtKB-KW"/>
</dbReference>
<dbReference type="GO" id="GO:0019843">
    <property type="term" value="F:rRNA binding"/>
    <property type="evidence" value="ECO:0007669"/>
    <property type="project" value="UniProtKB-UniRule"/>
</dbReference>
<dbReference type="GO" id="GO:0003735">
    <property type="term" value="F:structural constituent of ribosome"/>
    <property type="evidence" value="ECO:0007669"/>
    <property type="project" value="InterPro"/>
</dbReference>
<dbReference type="GO" id="GO:0006412">
    <property type="term" value="P:translation"/>
    <property type="evidence" value="ECO:0007669"/>
    <property type="project" value="UniProtKB-UniRule"/>
</dbReference>
<dbReference type="FunFam" id="3.30.1370.30:FF:000002">
    <property type="entry name" value="30S ribosomal protein S8"/>
    <property type="match status" value="1"/>
</dbReference>
<dbReference type="FunFam" id="3.30.1490.10:FF:000001">
    <property type="entry name" value="30S ribosomal protein S8"/>
    <property type="match status" value="1"/>
</dbReference>
<dbReference type="Gene3D" id="3.30.1370.30">
    <property type="match status" value="1"/>
</dbReference>
<dbReference type="Gene3D" id="3.30.1490.10">
    <property type="match status" value="1"/>
</dbReference>
<dbReference type="HAMAP" id="MF_01302_B">
    <property type="entry name" value="Ribosomal_uS8_B"/>
    <property type="match status" value="1"/>
</dbReference>
<dbReference type="InterPro" id="IPR000630">
    <property type="entry name" value="Ribosomal_uS8"/>
</dbReference>
<dbReference type="InterPro" id="IPR047863">
    <property type="entry name" value="Ribosomal_uS8_CS"/>
</dbReference>
<dbReference type="InterPro" id="IPR035987">
    <property type="entry name" value="Ribosomal_uS8_sf"/>
</dbReference>
<dbReference type="NCBIfam" id="NF001109">
    <property type="entry name" value="PRK00136.1"/>
    <property type="match status" value="1"/>
</dbReference>
<dbReference type="PANTHER" id="PTHR11758">
    <property type="entry name" value="40S RIBOSOMAL PROTEIN S15A"/>
    <property type="match status" value="1"/>
</dbReference>
<dbReference type="Pfam" id="PF00410">
    <property type="entry name" value="Ribosomal_S8"/>
    <property type="match status" value="1"/>
</dbReference>
<dbReference type="SUPFAM" id="SSF56047">
    <property type="entry name" value="Ribosomal protein S8"/>
    <property type="match status" value="1"/>
</dbReference>
<dbReference type="PROSITE" id="PS00053">
    <property type="entry name" value="RIBOSOMAL_S8"/>
    <property type="match status" value="1"/>
</dbReference>
<reference key="1">
    <citation type="journal article" date="2009" name="Appl. Environ. Microbiol.">
        <title>Rhizobium sp. strain NGR234 possesses a remarkable number of secretion systems.</title>
        <authorList>
            <person name="Schmeisser C."/>
            <person name="Liesegang H."/>
            <person name="Krysciak D."/>
            <person name="Bakkou N."/>
            <person name="Le Quere A."/>
            <person name="Wollherr A."/>
            <person name="Heinemeyer I."/>
            <person name="Morgenstern B."/>
            <person name="Pommerening-Roeser A."/>
            <person name="Flores M."/>
            <person name="Palacios R."/>
            <person name="Brenner S."/>
            <person name="Gottschalk G."/>
            <person name="Schmitz R.A."/>
            <person name="Broughton W.J."/>
            <person name="Perret X."/>
            <person name="Strittmatter A.W."/>
            <person name="Streit W.R."/>
        </authorList>
    </citation>
    <scope>NUCLEOTIDE SEQUENCE [LARGE SCALE GENOMIC DNA]</scope>
    <source>
        <strain>NBRC 101917 / NGR234</strain>
    </source>
</reference>
<accession>C3MAZ4</accession>
<sequence length="132" mass="14353">MAMTDPLGDMLTRIRNGAARRKSSVSTPASKLRARVLDVLQAEGYIRGYSEVEFGNGKAELNIELKYYEGASVIREIARVSKPGRRVYVSVKSIPQVANGLGITILSTPKGVMADHQAREQNVGGELLCSVF</sequence>
<gene>
    <name evidence="1" type="primary">rpsH</name>
    <name type="ordered locus">NGR_c12050</name>
</gene>
<comment type="function">
    <text evidence="1">One of the primary rRNA binding proteins, it binds directly to 16S rRNA central domain where it helps coordinate assembly of the platform of the 30S subunit.</text>
</comment>
<comment type="subunit">
    <text evidence="1">Part of the 30S ribosomal subunit. Contacts proteins S5 and S12.</text>
</comment>
<comment type="similarity">
    <text evidence="1">Belongs to the universal ribosomal protein uS8 family.</text>
</comment>
<name>RS8_SINFN</name>
<feature type="chain" id="PRO_1000165346" description="Small ribosomal subunit protein uS8">
    <location>
        <begin position="1"/>
        <end position="132"/>
    </location>
</feature>
<organism>
    <name type="scientific">Sinorhizobium fredii (strain NBRC 101917 / NGR234)</name>
    <dbReference type="NCBI Taxonomy" id="394"/>
    <lineage>
        <taxon>Bacteria</taxon>
        <taxon>Pseudomonadati</taxon>
        <taxon>Pseudomonadota</taxon>
        <taxon>Alphaproteobacteria</taxon>
        <taxon>Hyphomicrobiales</taxon>
        <taxon>Rhizobiaceae</taxon>
        <taxon>Sinorhizobium/Ensifer group</taxon>
        <taxon>Sinorhizobium</taxon>
    </lineage>
</organism>
<evidence type="ECO:0000255" key="1">
    <source>
        <dbReference type="HAMAP-Rule" id="MF_01302"/>
    </source>
</evidence>
<evidence type="ECO:0000305" key="2"/>
<keyword id="KW-1185">Reference proteome</keyword>
<keyword id="KW-0687">Ribonucleoprotein</keyword>
<keyword id="KW-0689">Ribosomal protein</keyword>
<keyword id="KW-0694">RNA-binding</keyword>
<keyword id="KW-0699">rRNA-binding</keyword>
<protein>
    <recommendedName>
        <fullName evidence="1">Small ribosomal subunit protein uS8</fullName>
    </recommendedName>
    <alternativeName>
        <fullName evidence="2">30S ribosomal protein S8</fullName>
    </alternativeName>
</protein>